<comment type="function">
    <text evidence="1">Modifies, by uridylylation and deuridylylation, the PII regulatory proteins (GlnB and homologs), in response to the nitrogen status of the cell that GlnD senses through the glutamine level. Under low glutamine levels, catalyzes the conversion of the PII proteins and UTP to PII-UMP and PPi, while under higher glutamine levels, GlnD hydrolyzes PII-UMP to PII and UMP (deuridylylation). Thus, controls uridylylation state and activity of the PII proteins, and plays an important role in the regulation of nitrogen assimilation and metabolism.</text>
</comment>
<comment type="catalytic activity">
    <reaction evidence="1">
        <text>[protein-PII]-L-tyrosine + UTP = [protein-PII]-uridylyl-L-tyrosine + diphosphate</text>
        <dbReference type="Rhea" id="RHEA:13673"/>
        <dbReference type="Rhea" id="RHEA-COMP:12147"/>
        <dbReference type="Rhea" id="RHEA-COMP:12148"/>
        <dbReference type="ChEBI" id="CHEBI:33019"/>
        <dbReference type="ChEBI" id="CHEBI:46398"/>
        <dbReference type="ChEBI" id="CHEBI:46858"/>
        <dbReference type="ChEBI" id="CHEBI:90602"/>
        <dbReference type="EC" id="2.7.7.59"/>
    </reaction>
</comment>
<comment type="catalytic activity">
    <reaction evidence="1">
        <text>[protein-PII]-uridylyl-L-tyrosine + H2O = [protein-PII]-L-tyrosine + UMP + H(+)</text>
        <dbReference type="Rhea" id="RHEA:48600"/>
        <dbReference type="Rhea" id="RHEA-COMP:12147"/>
        <dbReference type="Rhea" id="RHEA-COMP:12148"/>
        <dbReference type="ChEBI" id="CHEBI:15377"/>
        <dbReference type="ChEBI" id="CHEBI:15378"/>
        <dbReference type="ChEBI" id="CHEBI:46858"/>
        <dbReference type="ChEBI" id="CHEBI:57865"/>
        <dbReference type="ChEBI" id="CHEBI:90602"/>
    </reaction>
</comment>
<comment type="cofactor">
    <cofactor evidence="1">
        <name>Mg(2+)</name>
        <dbReference type="ChEBI" id="CHEBI:18420"/>
    </cofactor>
</comment>
<comment type="activity regulation">
    <text evidence="1">Uridylyltransferase (UTase) activity is inhibited by glutamine, while glutamine activates uridylyl-removing (UR) activity.</text>
</comment>
<comment type="domain">
    <text evidence="1">Has four distinct domains: an N-terminal nucleotidyltransferase (NT) domain responsible for UTase activity, a central HD domain that encodes UR activity, and two C-terminal ACT domains that seem to have a role in glutamine sensing.</text>
</comment>
<comment type="similarity">
    <text evidence="1">Belongs to the GlnD family.</text>
</comment>
<keyword id="KW-0378">Hydrolase</keyword>
<keyword id="KW-0460">Magnesium</keyword>
<keyword id="KW-0511">Multifunctional enzyme</keyword>
<keyword id="KW-0548">Nucleotidyltransferase</keyword>
<keyword id="KW-0677">Repeat</keyword>
<keyword id="KW-0808">Transferase</keyword>
<organism>
    <name type="scientific">Cupriavidus pinatubonensis (strain JMP 134 / LMG 1197)</name>
    <name type="common">Cupriavidus necator (strain JMP 134)</name>
    <dbReference type="NCBI Taxonomy" id="264198"/>
    <lineage>
        <taxon>Bacteria</taxon>
        <taxon>Pseudomonadati</taxon>
        <taxon>Pseudomonadota</taxon>
        <taxon>Betaproteobacteria</taxon>
        <taxon>Burkholderiales</taxon>
        <taxon>Burkholderiaceae</taxon>
        <taxon>Cupriavidus</taxon>
    </lineage>
</organism>
<accession>Q470D5</accession>
<evidence type="ECO:0000255" key="1">
    <source>
        <dbReference type="HAMAP-Rule" id="MF_00277"/>
    </source>
</evidence>
<evidence type="ECO:0000255" key="2">
    <source>
        <dbReference type="PROSITE-ProRule" id="PRU01175"/>
    </source>
</evidence>
<proteinExistence type="inferred from homology"/>
<feature type="chain" id="PRO_0000231689" description="Bifunctional uridylyltransferase/uridylyl-removing enzyme">
    <location>
        <begin position="1"/>
        <end position="869"/>
    </location>
</feature>
<feature type="domain" description="HD" evidence="2">
    <location>
        <begin position="450"/>
        <end position="572"/>
    </location>
</feature>
<feature type="domain" description="ACT 1" evidence="1">
    <location>
        <begin position="689"/>
        <end position="773"/>
    </location>
</feature>
<feature type="domain" description="ACT 2" evidence="1">
    <location>
        <begin position="800"/>
        <end position="869"/>
    </location>
</feature>
<feature type="region of interest" description="Uridylyltransferase">
    <location>
        <begin position="1"/>
        <end position="331"/>
    </location>
</feature>
<feature type="region of interest" description="Uridylyl-removing">
    <location>
        <begin position="332"/>
        <end position="688"/>
    </location>
</feature>
<gene>
    <name evidence="1" type="primary">glnD</name>
    <name type="ordered locus">Reut_A1883</name>
</gene>
<name>GLND_CUPPJ</name>
<reference key="1">
    <citation type="journal article" date="2010" name="PLoS ONE">
        <title>The complete multipartite genome sequence of Cupriavidus necator JMP134, a versatile pollutant degrader.</title>
        <authorList>
            <person name="Lykidis A."/>
            <person name="Perez-Pantoja D."/>
            <person name="Ledger T."/>
            <person name="Mavromatis K."/>
            <person name="Anderson I.J."/>
            <person name="Ivanova N.N."/>
            <person name="Hooper S.D."/>
            <person name="Lapidus A."/>
            <person name="Lucas S."/>
            <person name="Gonzalez B."/>
            <person name="Kyrpides N.C."/>
        </authorList>
    </citation>
    <scope>NUCLEOTIDE SEQUENCE [LARGE SCALE GENOMIC DNA]</scope>
    <source>
        <strain>JMP134 / LMG 1197</strain>
    </source>
</reference>
<dbReference type="EC" id="2.7.7.59" evidence="1"/>
<dbReference type="EC" id="3.1.4.-" evidence="1"/>
<dbReference type="EMBL" id="CP000090">
    <property type="protein sequence ID" value="AAZ61248.1"/>
    <property type="molecule type" value="Genomic_DNA"/>
</dbReference>
<dbReference type="SMR" id="Q470D5"/>
<dbReference type="STRING" id="264198.Reut_A1883"/>
<dbReference type="KEGG" id="reu:Reut_A1883"/>
<dbReference type="eggNOG" id="COG2844">
    <property type="taxonomic scope" value="Bacteria"/>
</dbReference>
<dbReference type="HOGENOM" id="CLU_012833_0_0_4"/>
<dbReference type="GO" id="GO:0008773">
    <property type="term" value="F:[protein-PII] uridylyltransferase activity"/>
    <property type="evidence" value="ECO:0007669"/>
    <property type="project" value="UniProtKB-UniRule"/>
</dbReference>
<dbReference type="GO" id="GO:0008081">
    <property type="term" value="F:phosphoric diester hydrolase activity"/>
    <property type="evidence" value="ECO:0007669"/>
    <property type="project" value="UniProtKB-UniRule"/>
</dbReference>
<dbReference type="GO" id="GO:0006808">
    <property type="term" value="P:regulation of nitrogen utilization"/>
    <property type="evidence" value="ECO:0007669"/>
    <property type="project" value="UniProtKB-UniRule"/>
</dbReference>
<dbReference type="CDD" id="cd04899">
    <property type="entry name" value="ACT_ACR-UUR-like_2"/>
    <property type="match status" value="1"/>
</dbReference>
<dbReference type="CDD" id="cd04900">
    <property type="entry name" value="ACT_UUR-like_1"/>
    <property type="match status" value="1"/>
</dbReference>
<dbReference type="CDD" id="cd00077">
    <property type="entry name" value="HDc"/>
    <property type="match status" value="1"/>
</dbReference>
<dbReference type="CDD" id="cd05401">
    <property type="entry name" value="NT_GlnE_GlnD_like"/>
    <property type="match status" value="1"/>
</dbReference>
<dbReference type="Gene3D" id="3.30.70.260">
    <property type="match status" value="1"/>
</dbReference>
<dbReference type="Gene3D" id="1.10.3210.10">
    <property type="entry name" value="Hypothetical protein af1432"/>
    <property type="match status" value="1"/>
</dbReference>
<dbReference type="Gene3D" id="1.20.120.330">
    <property type="entry name" value="Nucleotidyltransferases domain 2"/>
    <property type="match status" value="1"/>
</dbReference>
<dbReference type="HAMAP" id="MF_00277">
    <property type="entry name" value="PII_uridylyl_transf"/>
    <property type="match status" value="1"/>
</dbReference>
<dbReference type="InterPro" id="IPR045865">
    <property type="entry name" value="ACT-like_dom_sf"/>
</dbReference>
<dbReference type="InterPro" id="IPR002912">
    <property type="entry name" value="ACT_dom"/>
</dbReference>
<dbReference type="InterPro" id="IPR003607">
    <property type="entry name" value="HD/PDEase_dom"/>
</dbReference>
<dbReference type="InterPro" id="IPR006674">
    <property type="entry name" value="HD_domain"/>
</dbReference>
<dbReference type="InterPro" id="IPR043519">
    <property type="entry name" value="NT_sf"/>
</dbReference>
<dbReference type="InterPro" id="IPR013546">
    <property type="entry name" value="PII_UdlTrfase/GS_AdlTrfase"/>
</dbReference>
<dbReference type="InterPro" id="IPR002934">
    <property type="entry name" value="Polymerase_NTP_transf_dom"/>
</dbReference>
<dbReference type="InterPro" id="IPR010043">
    <property type="entry name" value="UTase/UR"/>
</dbReference>
<dbReference type="NCBIfam" id="NF002837">
    <property type="entry name" value="PRK03059.1"/>
    <property type="match status" value="1"/>
</dbReference>
<dbReference type="NCBIfam" id="TIGR01693">
    <property type="entry name" value="UTase_glnD"/>
    <property type="match status" value="1"/>
</dbReference>
<dbReference type="PANTHER" id="PTHR47320">
    <property type="entry name" value="BIFUNCTIONAL URIDYLYLTRANSFERASE/URIDYLYL-REMOVING ENZYME"/>
    <property type="match status" value="1"/>
</dbReference>
<dbReference type="PANTHER" id="PTHR47320:SF1">
    <property type="entry name" value="BIFUNCTIONAL URIDYLYLTRANSFERASE_URIDYLYL-REMOVING ENZYME"/>
    <property type="match status" value="1"/>
</dbReference>
<dbReference type="Pfam" id="PF08335">
    <property type="entry name" value="GlnD_UR_UTase"/>
    <property type="match status" value="1"/>
</dbReference>
<dbReference type="Pfam" id="PF01966">
    <property type="entry name" value="HD"/>
    <property type="match status" value="1"/>
</dbReference>
<dbReference type="Pfam" id="PF01909">
    <property type="entry name" value="NTP_transf_2"/>
    <property type="match status" value="1"/>
</dbReference>
<dbReference type="PIRSF" id="PIRSF006288">
    <property type="entry name" value="PII_uridyltransf"/>
    <property type="match status" value="1"/>
</dbReference>
<dbReference type="SMART" id="SM00471">
    <property type="entry name" value="HDc"/>
    <property type="match status" value="1"/>
</dbReference>
<dbReference type="SUPFAM" id="SSF55021">
    <property type="entry name" value="ACT-like"/>
    <property type="match status" value="2"/>
</dbReference>
<dbReference type="SUPFAM" id="SSF109604">
    <property type="entry name" value="HD-domain/PDEase-like"/>
    <property type="match status" value="1"/>
</dbReference>
<dbReference type="SUPFAM" id="SSF81301">
    <property type="entry name" value="Nucleotidyltransferase"/>
    <property type="match status" value="1"/>
</dbReference>
<dbReference type="SUPFAM" id="SSF81593">
    <property type="entry name" value="Nucleotidyltransferase substrate binding subunit/domain"/>
    <property type="match status" value="1"/>
</dbReference>
<dbReference type="PROSITE" id="PS51671">
    <property type="entry name" value="ACT"/>
    <property type="match status" value="2"/>
</dbReference>
<dbReference type="PROSITE" id="PS51831">
    <property type="entry name" value="HD"/>
    <property type="match status" value="1"/>
</dbReference>
<protein>
    <recommendedName>
        <fullName evidence="1">Bifunctional uridylyltransferase/uridylyl-removing enzyme</fullName>
        <shortName evidence="1">UTase/UR</shortName>
    </recommendedName>
    <alternativeName>
        <fullName evidence="1">Bifunctional [protein-PII] modification enzyme</fullName>
    </alternativeName>
    <alternativeName>
        <fullName evidence="1">Bifunctional nitrogen sensor protein</fullName>
    </alternativeName>
    <domain>
        <recommendedName>
            <fullName evidence="1">[Protein-PII] uridylyltransferase</fullName>
            <shortName evidence="1">PII uridylyltransferase</shortName>
            <shortName evidence="1">UTase</shortName>
            <ecNumber evidence="1">2.7.7.59</ecNumber>
        </recommendedName>
    </domain>
    <domain>
        <recommendedName>
            <fullName evidence="1">[Protein-PII]-UMP uridylyl-removing enzyme</fullName>
            <shortName evidence="1">UR</shortName>
            <ecNumber evidence="1">3.1.4.-</ecNumber>
        </recommendedName>
    </domain>
</protein>
<sequence length="869" mass="98722">MPTNLPALPMDTTPELLLAARVRDQLKADKQALFADFDLSSHVGTLVTRLRRAVDAALAEAWRGLDMPADAALVAVGGYGRGELFPYSDVDVLLLLRAEPDADTVSRLERFIGMCWDLGLEIGSSVRTVEDCIREARADITIQTSLLEARLLTGNRKLFEALRTQHQADLDPAAFFQAKLLEMRQRHAKYQDTPYALEPNCKESPGGLRDLQVILWMTKAAGLGDSWKELFERGLLTQREAQELSRNERLLKTIRARLHLVAGRRQDVLVFDLQTALAESFGYRQNANKRASEQLMRRYFWAAKAVTQLNSVLLLNIEALLFPSESQVTRVINERFVERQGMLEITSDSLYEDDPHAILETFLLYERTPGIKGLSPRTLRGLYNARTVMDARWRSDPENRRLFLAILQEPQGITHALRLMNQTSVLGRYLINFRRIVGQMQHDLFHVYTVDQHILMVVRNMRRFAIVEHTHEFPFCSQLMASFDKPWVLSVAALFHDIAKGRGGDHSKLGTVDARRFCKQHGIGREDADLICWLVEHHLTMSHVAQKQDLTDPDVVHAFARVVGDERHLTALYLLTVADVRGTSPKVWNAWKGKLLEDLYRITLRVLGGARVDPHSIWAQRQEETISQLRLKAFDPELGKPLWAQLDVAFFLRHDSRDIAWLTRHLFNKVDSPVPVVKARISPAGEGLQVAVYVKDQPDLFARICGYFERKAFSIQDAKIHTTRHGYALDTFQVTDPGLADDGGNYRDILALVEHELGDRLQQQAALPEPSQGRLSRQSRSFPIKPRVDLRPDERGQYYLLSLSANDRTGLLYAITRVLAKHRVSVHTARINTLGERVEDVFLVDGSRLAADNRLQIQLEQDLLAALEI</sequence>